<organism>
    <name type="scientific">Saccharomyces cerevisiae (strain ATCC 204508 / S288c)</name>
    <name type="common">Baker's yeast</name>
    <dbReference type="NCBI Taxonomy" id="559292"/>
    <lineage>
        <taxon>Eukaryota</taxon>
        <taxon>Fungi</taxon>
        <taxon>Dikarya</taxon>
        <taxon>Ascomycota</taxon>
        <taxon>Saccharomycotina</taxon>
        <taxon>Saccharomycetes</taxon>
        <taxon>Saccharomycetales</taxon>
        <taxon>Saccharomycetaceae</taxon>
        <taxon>Saccharomyces</taxon>
    </lineage>
</organism>
<gene>
    <name type="ordered locus">YHR219C-A</name>
</gene>
<dbReference type="EMBL" id="U00029">
    <property type="status" value="NOT_ANNOTATED_CDS"/>
    <property type="molecule type" value="Genomic_DNA"/>
</dbReference>
<dbReference type="EMBL" id="AF479999">
    <property type="protein sequence ID" value="AAL79312.1"/>
    <property type="molecule type" value="Genomic_DNA"/>
</dbReference>
<dbReference type="STRING" id="4932.YHR219C-A"/>
<dbReference type="PaxDb" id="4932-YHR219C-A"/>
<dbReference type="EnsemblFungi" id="YHR219C-A_mRNA">
    <property type="protein sequence ID" value="YHR219C-A"/>
    <property type="gene ID" value="YHR219C-A"/>
</dbReference>
<dbReference type="EnsemblFungi" id="YML133W-B_mRNA">
    <property type="protein sequence ID" value="YML133W-B"/>
    <property type="gene ID" value="YML133W-B"/>
</dbReference>
<dbReference type="EnsemblFungi" id="YNL339W-B_mRNA">
    <property type="protein sequence ID" value="YNL339W-B"/>
    <property type="gene ID" value="YNL339W-B"/>
</dbReference>
<dbReference type="AGR" id="SGD:S000028655"/>
<dbReference type="SGD" id="S000028655">
    <property type="gene designation" value="YHR219C-A"/>
</dbReference>
<dbReference type="HOGENOM" id="CLU_139933_0_0_1"/>
<dbReference type="GO" id="GO:0016020">
    <property type="term" value="C:membrane"/>
    <property type="evidence" value="ECO:0007669"/>
    <property type="project" value="UniProtKB-SubCell"/>
</dbReference>
<name>YH219_YEAST</name>
<evidence type="ECO:0000255" key="1"/>
<evidence type="ECO:0000305" key="2"/>
<evidence type="ECO:0000305" key="3">
    <source>
    </source>
</evidence>
<feature type="chain" id="PRO_0000299786" description="Putative UPF0479 protein YHR219C-A">
    <location>
        <begin position="1"/>
        <end position="160"/>
    </location>
</feature>
<feature type="transmembrane region" description="Helical" evidence="1">
    <location>
        <begin position="39"/>
        <end position="59"/>
    </location>
</feature>
<feature type="transmembrane region" description="Helical" evidence="1">
    <location>
        <begin position="136"/>
        <end position="156"/>
    </location>
</feature>
<proteinExistence type="uncertain"/>
<accession>P0CL34</accession>
<accession>Q8TF93</accession>
<protein>
    <recommendedName>
        <fullName>Putative UPF0479 protein YHR219C-A</fullName>
    </recommendedName>
</protein>
<keyword id="KW-0472">Membrane</keyword>
<keyword id="KW-0812">Transmembrane</keyword>
<keyword id="KW-1133">Transmembrane helix</keyword>
<comment type="subcellular location">
    <subcellularLocation>
        <location evidence="2">Membrane</location>
        <topology evidence="2">Multi-pass membrane protein</topology>
    </subcellularLocation>
</comment>
<comment type="miscellaneous">
    <text evidence="2">Completely overlaps YHR219W.</text>
</comment>
<comment type="similarity">
    <text evidence="2">Belongs to the UPF0479 family.</text>
</comment>
<comment type="caution">
    <text evidence="3">Product of a dubious gene prediction unlikely to encode a functional protein. Because of that it is not part of the S.cerevisiae S288c complete/reference proteome set.</text>
</comment>
<sequence length="160" mass="18627">MMPAKLQLDVLRTLQSSARHGTQTLKNSNFLERFHKDRIVFCLPFFPALFFVPVQKVLQHLCLRFTQVAPYFIIQLFDLPSRHAENLAPLLASCRIQYTNCFSSSSNGQVPSIISLYLRVDLSPFYAKKFQIPYRVPMIWLDVFQVFFVFLVISQHSLHS</sequence>
<reference key="1">
    <citation type="journal article" date="1994" name="Science">
        <title>Complete nucleotide sequence of Saccharomyces cerevisiae chromosome VIII.</title>
        <authorList>
            <person name="Johnston M."/>
            <person name="Andrews S."/>
            <person name="Brinkman R."/>
            <person name="Cooper J."/>
            <person name="Ding H."/>
            <person name="Dover J."/>
            <person name="Du Z."/>
            <person name="Favello A."/>
            <person name="Fulton L."/>
            <person name="Gattung S."/>
            <person name="Geisel C."/>
            <person name="Kirsten J."/>
            <person name="Kucaba T."/>
            <person name="Hillier L.W."/>
            <person name="Jier M."/>
            <person name="Johnston L."/>
            <person name="Langston Y."/>
            <person name="Latreille P."/>
            <person name="Louis E.J."/>
            <person name="Macri C."/>
            <person name="Mardis E."/>
            <person name="Menezes S."/>
            <person name="Mouser L."/>
            <person name="Nhan M."/>
            <person name="Rifkin L."/>
            <person name="Riles L."/>
            <person name="St Peter H."/>
            <person name="Trevaskis E."/>
            <person name="Vaughan K."/>
            <person name="Vignati D."/>
            <person name="Wilcox L."/>
            <person name="Wohldman P."/>
            <person name="Waterston R."/>
            <person name="Wilson R."/>
            <person name="Vaudin M."/>
        </authorList>
    </citation>
    <scope>NUCLEOTIDE SEQUENCE [LARGE SCALE GENOMIC DNA]</scope>
    <source>
        <strain>ATCC 204508 / S288c</strain>
    </source>
</reference>
<reference key="2">
    <citation type="journal article" date="2014" name="G3 (Bethesda)">
        <title>The reference genome sequence of Saccharomyces cerevisiae: Then and now.</title>
        <authorList>
            <person name="Engel S.R."/>
            <person name="Dietrich F.S."/>
            <person name="Fisk D.G."/>
            <person name="Binkley G."/>
            <person name="Balakrishnan R."/>
            <person name="Costanzo M.C."/>
            <person name="Dwight S.S."/>
            <person name="Hitz B.C."/>
            <person name="Karra K."/>
            <person name="Nash R.S."/>
            <person name="Weng S."/>
            <person name="Wong E.D."/>
            <person name="Lloyd P."/>
            <person name="Skrzypek M.S."/>
            <person name="Miyasato S.R."/>
            <person name="Simison M."/>
            <person name="Cherry J.M."/>
        </authorList>
    </citation>
    <scope>GENOME REANNOTATION</scope>
    <source>
        <strain>ATCC 204508 / S288c</strain>
    </source>
</reference>
<reference key="3">
    <citation type="journal article" date="2002" name="Nat. Biotechnol.">
        <title>An integrated approach for finding overlooked genes in yeast.</title>
        <authorList>
            <person name="Kumar A."/>
            <person name="Harrison P.M."/>
            <person name="Cheung K.-H."/>
            <person name="Lan N."/>
            <person name="Echols N."/>
            <person name="Bertone P."/>
            <person name="Miller P."/>
            <person name="Gerstein M.B."/>
            <person name="Snyder M."/>
        </authorList>
    </citation>
    <scope>NUCLEOTIDE SEQUENCE [GENOMIC DNA]</scope>
</reference>